<dbReference type="EMBL" id="CU468135">
    <property type="protein sequence ID" value="CAO96073.1"/>
    <property type="molecule type" value="Genomic_DNA"/>
</dbReference>
<dbReference type="RefSeq" id="WP_012440773.1">
    <property type="nucleotide sequence ID" value="NC_010694.1"/>
</dbReference>
<dbReference type="SMR" id="B2VE88"/>
<dbReference type="STRING" id="465817.ETA_10270"/>
<dbReference type="KEGG" id="eta:ETA_10270"/>
<dbReference type="eggNOG" id="COG1426">
    <property type="taxonomic scope" value="Bacteria"/>
</dbReference>
<dbReference type="HOGENOM" id="CLU_047530_3_1_6"/>
<dbReference type="OrthoDB" id="9790252at2"/>
<dbReference type="Proteomes" id="UP000001726">
    <property type="component" value="Chromosome"/>
</dbReference>
<dbReference type="GO" id="GO:0005886">
    <property type="term" value="C:plasma membrane"/>
    <property type="evidence" value="ECO:0007669"/>
    <property type="project" value="UniProtKB-SubCell"/>
</dbReference>
<dbReference type="GO" id="GO:0003677">
    <property type="term" value="F:DNA binding"/>
    <property type="evidence" value="ECO:0007669"/>
    <property type="project" value="UniProtKB-KW"/>
</dbReference>
<dbReference type="GO" id="GO:0008360">
    <property type="term" value="P:regulation of cell shape"/>
    <property type="evidence" value="ECO:0007669"/>
    <property type="project" value="UniProtKB-UniRule"/>
</dbReference>
<dbReference type="CDD" id="cd00093">
    <property type="entry name" value="HTH_XRE"/>
    <property type="match status" value="1"/>
</dbReference>
<dbReference type="Gene3D" id="1.10.260.40">
    <property type="entry name" value="lambda repressor-like DNA-binding domains"/>
    <property type="match status" value="1"/>
</dbReference>
<dbReference type="HAMAP" id="MF_02017">
    <property type="entry name" value="RodZ"/>
    <property type="match status" value="1"/>
</dbReference>
<dbReference type="InterPro" id="IPR050400">
    <property type="entry name" value="Bact_Cytoskel_RodZ"/>
</dbReference>
<dbReference type="InterPro" id="IPR001387">
    <property type="entry name" value="Cro/C1-type_HTH"/>
</dbReference>
<dbReference type="InterPro" id="IPR010982">
    <property type="entry name" value="Lambda_DNA-bd_dom_sf"/>
</dbReference>
<dbReference type="InterPro" id="IPR023690">
    <property type="entry name" value="RodZ"/>
</dbReference>
<dbReference type="InterPro" id="IPR025194">
    <property type="entry name" value="RodZ-like_C"/>
</dbReference>
<dbReference type="NCBIfam" id="NF008109">
    <property type="entry name" value="PRK10856.1"/>
    <property type="match status" value="1"/>
</dbReference>
<dbReference type="PANTHER" id="PTHR34475">
    <property type="match status" value="1"/>
</dbReference>
<dbReference type="PANTHER" id="PTHR34475:SF1">
    <property type="entry name" value="CYTOSKELETON PROTEIN RODZ"/>
    <property type="match status" value="1"/>
</dbReference>
<dbReference type="Pfam" id="PF13413">
    <property type="entry name" value="HTH_25"/>
    <property type="match status" value="1"/>
</dbReference>
<dbReference type="Pfam" id="PF13464">
    <property type="entry name" value="RodZ_C"/>
    <property type="match status" value="1"/>
</dbReference>
<dbReference type="SMART" id="SM00530">
    <property type="entry name" value="HTH_XRE"/>
    <property type="match status" value="1"/>
</dbReference>
<dbReference type="SUPFAM" id="SSF47413">
    <property type="entry name" value="lambda repressor-like DNA-binding domains"/>
    <property type="match status" value="1"/>
</dbReference>
<dbReference type="PROSITE" id="PS50943">
    <property type="entry name" value="HTH_CROC1"/>
    <property type="match status" value="1"/>
</dbReference>
<reference key="1">
    <citation type="journal article" date="2008" name="Environ. Microbiol.">
        <title>The genome of Erwinia tasmaniensis strain Et1/99, a non-pathogenic bacterium in the genus Erwinia.</title>
        <authorList>
            <person name="Kube M."/>
            <person name="Migdoll A.M."/>
            <person name="Mueller I."/>
            <person name="Kuhl H."/>
            <person name="Beck A."/>
            <person name="Reinhardt R."/>
            <person name="Geider K."/>
        </authorList>
    </citation>
    <scope>NUCLEOTIDE SEQUENCE [LARGE SCALE GENOMIC DNA]</scope>
    <source>
        <strain>DSM 17950 / CFBP 7177 / CIP 109463 / NCPPB 4357 / Et1/99</strain>
    </source>
</reference>
<organism>
    <name type="scientific">Erwinia tasmaniensis (strain DSM 17950 / CFBP 7177 / CIP 109463 / NCPPB 4357 / Et1/99)</name>
    <dbReference type="NCBI Taxonomy" id="465817"/>
    <lineage>
        <taxon>Bacteria</taxon>
        <taxon>Pseudomonadati</taxon>
        <taxon>Pseudomonadota</taxon>
        <taxon>Gammaproteobacteria</taxon>
        <taxon>Enterobacterales</taxon>
        <taxon>Erwiniaceae</taxon>
        <taxon>Erwinia</taxon>
    </lineage>
</organism>
<feature type="chain" id="PRO_0000361833" description="Cytoskeleton protein RodZ">
    <location>
        <begin position="1"/>
        <end position="340"/>
    </location>
</feature>
<feature type="topological domain" description="Cytoplasmic" evidence="1">
    <location>
        <begin position="1"/>
        <end position="111"/>
    </location>
</feature>
<feature type="transmembrane region" description="Helical; Signal-anchor for type II membrane protein" evidence="1">
    <location>
        <begin position="112"/>
        <end position="132"/>
    </location>
</feature>
<feature type="topological domain" description="Periplasmic" evidence="1">
    <location>
        <begin position="133"/>
        <end position="340"/>
    </location>
</feature>
<feature type="domain" description="HTH cro/C1-type" evidence="1">
    <location>
        <begin position="19"/>
        <end position="79"/>
    </location>
</feature>
<feature type="DNA-binding region" description="H-T-H motif" evidence="1">
    <location>
        <begin position="30"/>
        <end position="49"/>
    </location>
</feature>
<feature type="region of interest" description="Disordered" evidence="2">
    <location>
        <begin position="162"/>
        <end position="252"/>
    </location>
</feature>
<feature type="compositionally biased region" description="Polar residues" evidence="2">
    <location>
        <begin position="183"/>
        <end position="201"/>
    </location>
</feature>
<feature type="compositionally biased region" description="Low complexity" evidence="2">
    <location>
        <begin position="202"/>
        <end position="233"/>
    </location>
</feature>
<evidence type="ECO:0000255" key="1">
    <source>
        <dbReference type="HAMAP-Rule" id="MF_02017"/>
    </source>
</evidence>
<evidence type="ECO:0000256" key="2">
    <source>
        <dbReference type="SAM" id="MobiDB-lite"/>
    </source>
</evidence>
<name>RODZ_ERWT9</name>
<proteinExistence type="inferred from homology"/>
<keyword id="KW-0997">Cell inner membrane</keyword>
<keyword id="KW-1003">Cell membrane</keyword>
<keyword id="KW-0133">Cell shape</keyword>
<keyword id="KW-0238">DNA-binding</keyword>
<keyword id="KW-0472">Membrane</keyword>
<keyword id="KW-1185">Reference proteome</keyword>
<keyword id="KW-0735">Signal-anchor</keyword>
<keyword id="KW-0812">Transmembrane</keyword>
<keyword id="KW-1133">Transmembrane helix</keyword>
<comment type="function">
    <text evidence="1">Cytoskeletal protein that is involved in cell-shape control through regulation of the length of the long axis.</text>
</comment>
<comment type="subcellular location">
    <subcellularLocation>
        <location evidence="1">Cell inner membrane</location>
        <topology evidence="1">Single-pass type II membrane protein</topology>
    </subcellularLocation>
    <text evidence="1">Forms helical filaments along the long axis of the cell.</text>
</comment>
<comment type="domain">
    <text evidence="1">The helix-turn-helix (HTH) motif in the cytoplasmic domain of the N-terminus is involved in the formation of spirals to maintain the rigid rod shape. As this protein is anchored in the cytoplasmic membrane, the HTH motif may contribute to protein-protein interactions to form the RodZ helix, which is localized beneath the cytoplasmic membrane. The C-terminal domain may be critical for determination of the rod shape by probably interacting with enzymes required for synthesis of the peptidoglycan layer, including PBPs in the periplasm.</text>
</comment>
<comment type="similarity">
    <text evidence="1">Belongs to the RodZ family.</text>
</comment>
<protein>
    <recommendedName>
        <fullName evidence="1">Cytoskeleton protein RodZ</fullName>
    </recommendedName>
</protein>
<sequence length="340" mass="36183">MNTEATQEKSNVNSTGERLRTAREQMGLTQQNVAERLCLKLSTIRDIEEDNSPASLASTFLRGYIRSYARLVHVPEEELLPMMAKQAPVRDAKVEMMQSYSLGKQRKKRDGWLMIFTWLVLFVVLGLTGAWWWQNHKAAQDDLVSMGDQNASVEEDGRQSIALSDDNANGGAQTAIPLDNKPATANNAPSSVTATSDNGTPAATAQSSQVTASNAAPAANAVNDNTPPVAVAPSQAATNSSAAAPLPTGSAAVSRPAADANAMMMTFSRDCWLDVTDATGKKLFSGIQRSGGKLSLAGKAPYHLKIGAPAAVQIEYQGKPVDLGRFIRTNQVARLTVGAP</sequence>
<gene>
    <name evidence="1" type="primary">rodZ</name>
    <name type="ordered locus">ETA_10270</name>
</gene>
<accession>B2VE88</accession>